<feature type="chain" id="PRO_0000212986" description="Palmitoyltransferase SWF1">
    <location>
        <begin position="1"/>
        <end position="353"/>
    </location>
</feature>
<feature type="topological domain" description="Lumenal" evidence="2">
    <location>
        <position position="1"/>
    </location>
</feature>
<feature type="transmembrane region" description="Helical" evidence="2">
    <location>
        <begin position="2"/>
        <end position="22"/>
    </location>
</feature>
<feature type="topological domain" description="Cytoplasmic" evidence="2">
    <location>
        <begin position="23"/>
        <end position="61"/>
    </location>
</feature>
<feature type="transmembrane region" description="Helical" evidence="2">
    <location>
        <begin position="62"/>
        <end position="82"/>
    </location>
</feature>
<feature type="topological domain" description="Lumenal" evidence="2">
    <location>
        <begin position="83"/>
        <end position="100"/>
    </location>
</feature>
<feature type="transmembrane region" description="Helical" evidence="2">
    <location>
        <begin position="101"/>
        <end position="121"/>
    </location>
</feature>
<feature type="topological domain" description="Cytoplasmic" evidence="2">
    <location>
        <begin position="122"/>
        <end position="190"/>
    </location>
</feature>
<feature type="transmembrane region" description="Helical" evidence="2">
    <location>
        <begin position="191"/>
        <end position="211"/>
    </location>
</feature>
<feature type="topological domain" description="Lumenal" evidence="2">
    <location>
        <begin position="212"/>
        <end position="233"/>
    </location>
</feature>
<feature type="transmembrane region" description="Helical" evidence="2">
    <location>
        <begin position="234"/>
        <end position="254"/>
    </location>
</feature>
<feature type="topological domain" description="Cytoplasmic" evidence="2">
    <location>
        <begin position="255"/>
        <end position="353"/>
    </location>
</feature>
<feature type="domain" description="DHHC" evidence="3">
    <location>
        <begin position="147"/>
        <end position="197"/>
    </location>
</feature>
<feature type="active site" description="S-palmitoyl cysteine intermediate" evidence="1">
    <location>
        <position position="177"/>
    </location>
</feature>
<accession>Q5A861</accession>
<accession>A0A1D8PRU3</accession>
<gene>
    <name type="primary">SWF1</name>
    <name type="ordered locus">CAALFM_CR00870CA</name>
    <name type="ORF">CaO19.10777</name>
    <name type="ORF">CaO19.3267</name>
</gene>
<proteinExistence type="inferred from homology"/>
<organism>
    <name type="scientific">Candida albicans (strain SC5314 / ATCC MYA-2876)</name>
    <name type="common">Yeast</name>
    <dbReference type="NCBI Taxonomy" id="237561"/>
    <lineage>
        <taxon>Eukaryota</taxon>
        <taxon>Fungi</taxon>
        <taxon>Dikarya</taxon>
        <taxon>Ascomycota</taxon>
        <taxon>Saccharomycotina</taxon>
        <taxon>Pichiomycetes</taxon>
        <taxon>Debaryomycetaceae</taxon>
        <taxon>Candida/Lodderomyces clade</taxon>
        <taxon>Candida</taxon>
    </lineage>
</organism>
<protein>
    <recommendedName>
        <fullName>Palmitoyltransferase SWF1</fullName>
        <ecNumber>2.3.1.225</ecNumber>
    </recommendedName>
</protein>
<evidence type="ECO:0000250" key="1"/>
<evidence type="ECO:0000255" key="2"/>
<evidence type="ECO:0000255" key="3">
    <source>
        <dbReference type="PROSITE-ProRule" id="PRU00067"/>
    </source>
</evidence>
<evidence type="ECO:0000305" key="4"/>
<reference key="1">
    <citation type="journal article" date="2004" name="Proc. Natl. Acad. Sci. U.S.A.">
        <title>The diploid genome sequence of Candida albicans.</title>
        <authorList>
            <person name="Jones T."/>
            <person name="Federspiel N.A."/>
            <person name="Chibana H."/>
            <person name="Dungan J."/>
            <person name="Kalman S."/>
            <person name="Magee B.B."/>
            <person name="Newport G."/>
            <person name="Thorstenson Y.R."/>
            <person name="Agabian N."/>
            <person name="Magee P.T."/>
            <person name="Davis R.W."/>
            <person name="Scherer S."/>
        </authorList>
    </citation>
    <scope>NUCLEOTIDE SEQUENCE [LARGE SCALE GENOMIC DNA]</scope>
    <source>
        <strain>SC5314 / ATCC MYA-2876</strain>
    </source>
</reference>
<reference key="2">
    <citation type="journal article" date="2007" name="Genome Biol.">
        <title>Assembly of the Candida albicans genome into sixteen supercontigs aligned on the eight chromosomes.</title>
        <authorList>
            <person name="van het Hoog M."/>
            <person name="Rast T.J."/>
            <person name="Martchenko M."/>
            <person name="Grindle S."/>
            <person name="Dignard D."/>
            <person name="Hogues H."/>
            <person name="Cuomo C."/>
            <person name="Berriman M."/>
            <person name="Scherer S."/>
            <person name="Magee B.B."/>
            <person name="Whiteway M."/>
            <person name="Chibana H."/>
            <person name="Nantel A."/>
            <person name="Magee P.T."/>
        </authorList>
    </citation>
    <scope>GENOME REANNOTATION</scope>
    <source>
        <strain>SC5314 / ATCC MYA-2876</strain>
    </source>
</reference>
<reference key="3">
    <citation type="journal article" date="2013" name="Genome Biol.">
        <title>Assembly of a phased diploid Candida albicans genome facilitates allele-specific measurements and provides a simple model for repeat and indel structure.</title>
        <authorList>
            <person name="Muzzey D."/>
            <person name="Schwartz K."/>
            <person name="Weissman J.S."/>
            <person name="Sherlock G."/>
        </authorList>
    </citation>
    <scope>NUCLEOTIDE SEQUENCE [LARGE SCALE GENOMIC DNA]</scope>
    <scope>GENOME REANNOTATION</scope>
    <source>
        <strain>SC5314 / ATCC MYA-2876</strain>
    </source>
</reference>
<sequence>MLFTLIVCLTIISSLATFLLLFGDSPSFRNTPIQKLRNSLLSISRDIFQFYHWLDEKLNGQLLKILNWLVPVGYVMVVTVCFQQFLTHTLPMLSSPGLFRLFTIYFSMVLIYASTILAAFSDPGRITTINLKSYPYTPNQLIFFDGKTCSTCHIAKPARSKHCSVCNQCFLLYDHHCVWINNCVGYYNYKWFMLFLISNINMLGYGGWLCYWALTPVSWRKITSTNNANKVTGIFLILCSIFIVITTLFTFLHLRYIYLGVTTNELDKWSEIDHLVGLGVLYQIEPSIANENYVERAILDGNAVYISLKDERILIYNSNVKNFKLQLIQSVEDDLVNIYDHGFWNNLIERLKW</sequence>
<dbReference type="EC" id="2.3.1.225"/>
<dbReference type="EMBL" id="CP017630">
    <property type="protein sequence ID" value="AOW30852.1"/>
    <property type="molecule type" value="Genomic_DNA"/>
</dbReference>
<dbReference type="RefSeq" id="XP_717957.1">
    <property type="nucleotide sequence ID" value="XM_712864.1"/>
</dbReference>
<dbReference type="SMR" id="Q5A861"/>
<dbReference type="FunCoup" id="Q5A861">
    <property type="interactions" value="34"/>
</dbReference>
<dbReference type="STRING" id="237561.Q5A861"/>
<dbReference type="EnsemblFungi" id="CR_00870C_A-T">
    <property type="protein sequence ID" value="CR_00870C_A-T-p1"/>
    <property type="gene ID" value="CR_00870C_A"/>
</dbReference>
<dbReference type="GeneID" id="3640398"/>
<dbReference type="KEGG" id="cal:CAALFM_CR00870CA"/>
<dbReference type="CGD" id="CAL0000193712">
    <property type="gene designation" value="orf19.10777"/>
</dbReference>
<dbReference type="VEuPathDB" id="FungiDB:CR_00870C_A"/>
<dbReference type="eggNOG" id="KOG1312">
    <property type="taxonomic scope" value="Eukaryota"/>
</dbReference>
<dbReference type="HOGENOM" id="CLU_042181_2_0_1"/>
<dbReference type="InParanoid" id="Q5A861"/>
<dbReference type="OMA" id="HIYLIWA"/>
<dbReference type="OrthoDB" id="9909019at2759"/>
<dbReference type="PRO" id="PR:Q5A861"/>
<dbReference type="Proteomes" id="UP000000559">
    <property type="component" value="Chromosome R"/>
</dbReference>
<dbReference type="GO" id="GO:0005783">
    <property type="term" value="C:endoplasmic reticulum"/>
    <property type="evidence" value="ECO:0000318"/>
    <property type="project" value="GO_Central"/>
</dbReference>
<dbReference type="GO" id="GO:0005789">
    <property type="term" value="C:endoplasmic reticulum membrane"/>
    <property type="evidence" value="ECO:0007669"/>
    <property type="project" value="UniProtKB-SubCell"/>
</dbReference>
<dbReference type="GO" id="GO:0005794">
    <property type="term" value="C:Golgi apparatus"/>
    <property type="evidence" value="ECO:0000318"/>
    <property type="project" value="GO_Central"/>
</dbReference>
<dbReference type="GO" id="GO:0019706">
    <property type="term" value="F:protein-cysteine S-palmitoyltransferase activity"/>
    <property type="evidence" value="ECO:0000318"/>
    <property type="project" value="GO_Central"/>
</dbReference>
<dbReference type="GO" id="GO:0006612">
    <property type="term" value="P:protein targeting to membrane"/>
    <property type="evidence" value="ECO:0000318"/>
    <property type="project" value="GO_Central"/>
</dbReference>
<dbReference type="InterPro" id="IPR001594">
    <property type="entry name" value="Palmitoyltrfase_DHHC"/>
</dbReference>
<dbReference type="InterPro" id="IPR039859">
    <property type="entry name" value="PFA4/ZDH16/20/ERF2-like"/>
</dbReference>
<dbReference type="PANTHER" id="PTHR22883:SF489">
    <property type="entry name" value="PALMITOYLTRANSFERASE SWF1"/>
    <property type="match status" value="1"/>
</dbReference>
<dbReference type="PANTHER" id="PTHR22883">
    <property type="entry name" value="ZINC FINGER DHHC DOMAIN CONTAINING PROTEIN"/>
    <property type="match status" value="1"/>
</dbReference>
<dbReference type="Pfam" id="PF01529">
    <property type="entry name" value="DHHC"/>
    <property type="match status" value="1"/>
</dbReference>
<dbReference type="PROSITE" id="PS50216">
    <property type="entry name" value="DHHC"/>
    <property type="match status" value="1"/>
</dbReference>
<comment type="function">
    <text evidence="1">Palmitoyltransferase that targets several endosomal SNAREs. Palmitoylates the SNAREs at cysteine residues close to the cytoplasmic end of their transmembrane domain. May have a role in the cellular quality control of transmembrane domain-containing proteins (By similarity).</text>
</comment>
<comment type="catalytic activity">
    <reaction>
        <text>L-cysteinyl-[protein] + hexadecanoyl-CoA = S-hexadecanoyl-L-cysteinyl-[protein] + CoA</text>
        <dbReference type="Rhea" id="RHEA:36683"/>
        <dbReference type="Rhea" id="RHEA-COMP:10131"/>
        <dbReference type="Rhea" id="RHEA-COMP:11032"/>
        <dbReference type="ChEBI" id="CHEBI:29950"/>
        <dbReference type="ChEBI" id="CHEBI:57287"/>
        <dbReference type="ChEBI" id="CHEBI:57379"/>
        <dbReference type="ChEBI" id="CHEBI:74151"/>
        <dbReference type="EC" id="2.3.1.225"/>
    </reaction>
</comment>
<comment type="subcellular location">
    <subcellularLocation>
        <location evidence="1">Endoplasmic reticulum membrane</location>
        <topology evidence="1">Multi-pass membrane protein</topology>
    </subcellularLocation>
</comment>
<comment type="domain">
    <text evidence="1">The DHHC domain is required for palmitoyltransferase activity.</text>
</comment>
<comment type="similarity">
    <text evidence="4">Belongs to the DHHC palmitoyltransferase family. SWF1 subfamily.</text>
</comment>
<name>SWF1_CANAL</name>
<keyword id="KW-0012">Acyltransferase</keyword>
<keyword id="KW-0256">Endoplasmic reticulum</keyword>
<keyword id="KW-0449">Lipoprotein</keyword>
<keyword id="KW-0472">Membrane</keyword>
<keyword id="KW-0564">Palmitate</keyword>
<keyword id="KW-1185">Reference proteome</keyword>
<keyword id="KW-0808">Transferase</keyword>
<keyword id="KW-0812">Transmembrane</keyword>
<keyword id="KW-1133">Transmembrane helix</keyword>